<sequence>MSEITAAMVKELREKTGAGMMDCKKALAETAGDMEAAIDWLRAKGIAKADKKSGRTAAEGLIGVSSQGTKAVVVEVNSETDFVARNDAFQELVRGIAKVAVSTDGTVDAVAAATYPASGKSVSDTIKDAIATIGENMNLRRSVALSVEDGVVATYIHNAVSDGLGKLGVLVALKSTGDKEALNAIGRQVAMHIAATAPLAIRPEEVDAAVAERERNVFIEQSRASGKPDNIIEKMVDGRMRKFFEEVALLSQAFVINPDLTVAAAIKEAEKAVGAPIEVAGMARLLLGEGVEKEETDFAAEVAAAVKG</sequence>
<organism>
    <name type="scientific">Rhizobium johnstonii (strain DSM 114642 / LMG 32736 / 3841)</name>
    <name type="common">Rhizobium leguminosarum bv. viciae</name>
    <dbReference type="NCBI Taxonomy" id="216596"/>
    <lineage>
        <taxon>Bacteria</taxon>
        <taxon>Pseudomonadati</taxon>
        <taxon>Pseudomonadota</taxon>
        <taxon>Alphaproteobacteria</taxon>
        <taxon>Hyphomicrobiales</taxon>
        <taxon>Rhizobiaceae</taxon>
        <taxon>Rhizobium/Agrobacterium group</taxon>
        <taxon>Rhizobium</taxon>
        <taxon>Rhizobium johnstonii</taxon>
    </lineage>
</organism>
<protein>
    <recommendedName>
        <fullName evidence="1">Elongation factor Ts</fullName>
        <shortName evidence="1">EF-Ts</shortName>
    </recommendedName>
</protein>
<accession>Q1MH53</accession>
<comment type="function">
    <text evidence="1">Associates with the EF-Tu.GDP complex and induces the exchange of GDP to GTP. It remains bound to the aminoacyl-tRNA.EF-Tu.GTP complex up to the GTP hydrolysis stage on the ribosome.</text>
</comment>
<comment type="subcellular location">
    <subcellularLocation>
        <location evidence="1">Cytoplasm</location>
    </subcellularLocation>
</comment>
<comment type="similarity">
    <text evidence="1">Belongs to the EF-Ts family.</text>
</comment>
<gene>
    <name evidence="1" type="primary">tsf</name>
    <name type="ordered locus">RL2222</name>
</gene>
<proteinExistence type="inferred from homology"/>
<keyword id="KW-0963">Cytoplasm</keyword>
<keyword id="KW-0251">Elongation factor</keyword>
<keyword id="KW-0648">Protein biosynthesis</keyword>
<reference key="1">
    <citation type="journal article" date="2006" name="Genome Biol.">
        <title>The genome of Rhizobium leguminosarum has recognizable core and accessory components.</title>
        <authorList>
            <person name="Young J.P.W."/>
            <person name="Crossman L.C."/>
            <person name="Johnston A.W.B."/>
            <person name="Thomson N.R."/>
            <person name="Ghazoui Z.F."/>
            <person name="Hull K.H."/>
            <person name="Wexler M."/>
            <person name="Curson A.R.J."/>
            <person name="Todd J.D."/>
            <person name="Poole P.S."/>
            <person name="Mauchline T.H."/>
            <person name="East A.K."/>
            <person name="Quail M.A."/>
            <person name="Churcher C."/>
            <person name="Arrowsmith C."/>
            <person name="Cherevach I."/>
            <person name="Chillingworth T."/>
            <person name="Clarke K."/>
            <person name="Cronin A."/>
            <person name="Davis P."/>
            <person name="Fraser A."/>
            <person name="Hance Z."/>
            <person name="Hauser H."/>
            <person name="Jagels K."/>
            <person name="Moule S."/>
            <person name="Mungall K."/>
            <person name="Norbertczak H."/>
            <person name="Rabbinowitsch E."/>
            <person name="Sanders M."/>
            <person name="Simmonds M."/>
            <person name="Whitehead S."/>
            <person name="Parkhill J."/>
        </authorList>
    </citation>
    <scope>NUCLEOTIDE SEQUENCE [LARGE SCALE GENOMIC DNA]</scope>
    <source>
        <strain>DSM 114642 / LMG 32736 / 3841</strain>
    </source>
</reference>
<dbReference type="EMBL" id="AM236080">
    <property type="protein sequence ID" value="CAK07714.1"/>
    <property type="molecule type" value="Genomic_DNA"/>
</dbReference>
<dbReference type="RefSeq" id="WP_011651815.1">
    <property type="nucleotide sequence ID" value="NC_008380.1"/>
</dbReference>
<dbReference type="SMR" id="Q1MH53"/>
<dbReference type="EnsemblBacteria" id="CAK07714">
    <property type="protein sequence ID" value="CAK07714"/>
    <property type="gene ID" value="RL2222"/>
</dbReference>
<dbReference type="KEGG" id="rle:RL2222"/>
<dbReference type="eggNOG" id="COG0264">
    <property type="taxonomic scope" value="Bacteria"/>
</dbReference>
<dbReference type="HOGENOM" id="CLU_047155_2_0_5"/>
<dbReference type="Proteomes" id="UP000006575">
    <property type="component" value="Chromosome"/>
</dbReference>
<dbReference type="GO" id="GO:0005737">
    <property type="term" value="C:cytoplasm"/>
    <property type="evidence" value="ECO:0007669"/>
    <property type="project" value="UniProtKB-SubCell"/>
</dbReference>
<dbReference type="GO" id="GO:0003746">
    <property type="term" value="F:translation elongation factor activity"/>
    <property type="evidence" value="ECO:0007669"/>
    <property type="project" value="UniProtKB-UniRule"/>
</dbReference>
<dbReference type="CDD" id="cd14275">
    <property type="entry name" value="UBA_EF-Ts"/>
    <property type="match status" value="1"/>
</dbReference>
<dbReference type="FunFam" id="1.10.286.20:FF:000001">
    <property type="entry name" value="Elongation factor Ts"/>
    <property type="match status" value="1"/>
</dbReference>
<dbReference type="FunFam" id="1.10.8.10:FF:000001">
    <property type="entry name" value="Elongation factor Ts"/>
    <property type="match status" value="1"/>
</dbReference>
<dbReference type="Gene3D" id="1.10.286.20">
    <property type="match status" value="1"/>
</dbReference>
<dbReference type="Gene3D" id="1.10.8.10">
    <property type="entry name" value="DNA helicase RuvA subunit, C-terminal domain"/>
    <property type="match status" value="1"/>
</dbReference>
<dbReference type="Gene3D" id="3.30.479.20">
    <property type="entry name" value="Elongation factor Ts, dimerisation domain"/>
    <property type="match status" value="2"/>
</dbReference>
<dbReference type="HAMAP" id="MF_00050">
    <property type="entry name" value="EF_Ts"/>
    <property type="match status" value="1"/>
</dbReference>
<dbReference type="InterPro" id="IPR036402">
    <property type="entry name" value="EF-Ts_dimer_sf"/>
</dbReference>
<dbReference type="InterPro" id="IPR001816">
    <property type="entry name" value="Transl_elong_EFTs/EF1B"/>
</dbReference>
<dbReference type="InterPro" id="IPR014039">
    <property type="entry name" value="Transl_elong_EFTs/EF1B_dimer"/>
</dbReference>
<dbReference type="InterPro" id="IPR018101">
    <property type="entry name" value="Transl_elong_Ts_CS"/>
</dbReference>
<dbReference type="InterPro" id="IPR009060">
    <property type="entry name" value="UBA-like_sf"/>
</dbReference>
<dbReference type="NCBIfam" id="TIGR00116">
    <property type="entry name" value="tsf"/>
    <property type="match status" value="1"/>
</dbReference>
<dbReference type="PANTHER" id="PTHR11741">
    <property type="entry name" value="ELONGATION FACTOR TS"/>
    <property type="match status" value="1"/>
</dbReference>
<dbReference type="PANTHER" id="PTHR11741:SF0">
    <property type="entry name" value="ELONGATION FACTOR TS, MITOCHONDRIAL"/>
    <property type="match status" value="1"/>
</dbReference>
<dbReference type="Pfam" id="PF00889">
    <property type="entry name" value="EF_TS"/>
    <property type="match status" value="1"/>
</dbReference>
<dbReference type="SUPFAM" id="SSF54713">
    <property type="entry name" value="Elongation factor Ts (EF-Ts), dimerisation domain"/>
    <property type="match status" value="2"/>
</dbReference>
<dbReference type="SUPFAM" id="SSF46934">
    <property type="entry name" value="UBA-like"/>
    <property type="match status" value="1"/>
</dbReference>
<dbReference type="PROSITE" id="PS01126">
    <property type="entry name" value="EF_TS_1"/>
    <property type="match status" value="1"/>
</dbReference>
<dbReference type="PROSITE" id="PS01127">
    <property type="entry name" value="EF_TS_2"/>
    <property type="match status" value="1"/>
</dbReference>
<name>EFTS_RHIJ3</name>
<evidence type="ECO:0000255" key="1">
    <source>
        <dbReference type="HAMAP-Rule" id="MF_00050"/>
    </source>
</evidence>
<feature type="chain" id="PRO_1000006159" description="Elongation factor Ts">
    <location>
        <begin position="1"/>
        <end position="308"/>
    </location>
</feature>
<feature type="region of interest" description="Involved in Mg(2+) ion dislocation from EF-Tu" evidence="1">
    <location>
        <begin position="80"/>
        <end position="83"/>
    </location>
</feature>